<evidence type="ECO:0000256" key="1">
    <source>
        <dbReference type="SAM" id="MobiDB-lite"/>
    </source>
</evidence>
<evidence type="ECO:0000269" key="2">
    <source>
    </source>
</evidence>
<evidence type="ECO:0000303" key="3">
    <source>
    </source>
</evidence>
<evidence type="ECO:0000305" key="4"/>
<evidence type="ECO:0000312" key="5">
    <source>
        <dbReference type="MGI" id="MGI:3705243"/>
    </source>
</evidence>
<organism>
    <name type="scientific">Mus musculus</name>
    <name type="common">Mouse</name>
    <dbReference type="NCBI Taxonomy" id="10090"/>
    <lineage>
        <taxon>Eukaryota</taxon>
        <taxon>Metazoa</taxon>
        <taxon>Chordata</taxon>
        <taxon>Craniata</taxon>
        <taxon>Vertebrata</taxon>
        <taxon>Euteleostomi</taxon>
        <taxon>Mammalia</taxon>
        <taxon>Eutheria</taxon>
        <taxon>Euarchontoglires</taxon>
        <taxon>Glires</taxon>
        <taxon>Rodentia</taxon>
        <taxon>Myomorpha</taxon>
        <taxon>Muroidea</taxon>
        <taxon>Muridae</taxon>
        <taxon>Murinae</taxon>
        <taxon>Mus</taxon>
        <taxon>Mus</taxon>
    </lineage>
</organism>
<proteinExistence type="evidence at protein level"/>
<name>K1210_MOUSE</name>
<protein>
    <recommendedName>
        <fullName evidence="4">Acrosomal protein KIAA1210</fullName>
    </recommendedName>
</protein>
<reference key="1">
    <citation type="journal article" date="2009" name="PLoS Biol.">
        <title>Lineage-specific biology revealed by a finished genome assembly of the mouse.</title>
        <authorList>
            <person name="Church D.M."/>
            <person name="Goodstadt L."/>
            <person name="Hillier L.W."/>
            <person name="Zody M.C."/>
            <person name="Goldstein S."/>
            <person name="She X."/>
            <person name="Bult C.J."/>
            <person name="Agarwala R."/>
            <person name="Cherry J.L."/>
            <person name="DiCuccio M."/>
            <person name="Hlavina W."/>
            <person name="Kapustin Y."/>
            <person name="Meric P."/>
            <person name="Maglott D."/>
            <person name="Birtle Z."/>
            <person name="Marques A.C."/>
            <person name="Graves T."/>
            <person name="Zhou S."/>
            <person name="Teague B."/>
            <person name="Potamousis K."/>
            <person name="Churas C."/>
            <person name="Place M."/>
            <person name="Herschleb J."/>
            <person name="Runnheim R."/>
            <person name="Forrest D."/>
            <person name="Amos-Landgraf J."/>
            <person name="Schwartz D.C."/>
            <person name="Cheng Z."/>
            <person name="Lindblad-Toh K."/>
            <person name="Eichler E.E."/>
            <person name="Ponting C.P."/>
        </authorList>
    </citation>
    <scope>NUCLEOTIDE SEQUENCE [LARGE SCALE GENOMIC DNA]</scope>
    <source>
        <strain>C57BL/6J</strain>
    </source>
</reference>
<reference key="2">
    <citation type="journal article" date="2017" name="Biol. Reprod.">
        <title>Identification of KIAA1210 as a novel X-chromosome-linked protein that localizes to the acrosome and associates with the ectoplasmic specialization in testes.</title>
        <authorList>
            <person name="Iwamori T."/>
            <person name="Iwamori N."/>
            <person name="Matsumoto M."/>
            <person name="Ono E."/>
            <person name="Matzuk M.M."/>
        </authorList>
    </citation>
    <scope>SUBCELLULAR LOCATION</scope>
    <scope>TISSUE SPECIFICITY</scope>
    <scope>INTERACTION WITH TOP2B</scope>
</reference>
<dbReference type="EMBL" id="AL450395">
    <property type="status" value="NOT_ANNOTATED_CDS"/>
    <property type="molecule type" value="Genomic_DNA"/>
</dbReference>
<dbReference type="FunCoup" id="E9Q0C6">
    <property type="interactions" value="9"/>
</dbReference>
<dbReference type="STRING" id="10090.ENSMUSP00000126231"/>
<dbReference type="PhosphoSitePlus" id="E9Q0C6"/>
<dbReference type="SwissPalm" id="E9Q0C6"/>
<dbReference type="PaxDb" id="10090-ENSMUSP00000126231"/>
<dbReference type="ProteomicsDB" id="269044"/>
<dbReference type="Antibodypedia" id="63509">
    <property type="antibodies" value="12 antibodies from 7 providers"/>
</dbReference>
<dbReference type="Ensembl" id="ENSMUST00000169499.2">
    <property type="protein sequence ID" value="ENSMUSP00000126231.2"/>
    <property type="gene ID" value="ENSMUSG00000091556.9"/>
</dbReference>
<dbReference type="AGR" id="MGI:3705243"/>
<dbReference type="MGI" id="MGI:3705243">
    <property type="gene designation" value="Gm14569"/>
</dbReference>
<dbReference type="VEuPathDB" id="HostDB:ENSMUSG00000091556"/>
<dbReference type="eggNOG" id="ENOG502QXCA">
    <property type="taxonomic scope" value="Eukaryota"/>
</dbReference>
<dbReference type="GeneTree" id="ENSGT00940000163031"/>
<dbReference type="HOGENOM" id="CLU_002901_0_0_1"/>
<dbReference type="InParanoid" id="E9Q0C6"/>
<dbReference type="OMA" id="KFQPQMS"/>
<dbReference type="TreeFam" id="TF328810"/>
<dbReference type="PRO" id="PR:E9Q0C6"/>
<dbReference type="Proteomes" id="UP000000589">
    <property type="component" value="Chromosome X"/>
</dbReference>
<dbReference type="RNAct" id="E9Q0C6">
    <property type="molecule type" value="protein"/>
</dbReference>
<dbReference type="Bgee" id="ENSMUSG00000091556">
    <property type="expression patterns" value="Expressed in testis and 15 other cell types or tissues"/>
</dbReference>
<dbReference type="GO" id="GO:0001669">
    <property type="term" value="C:acrosomal vesicle"/>
    <property type="evidence" value="ECO:0000314"/>
    <property type="project" value="UniProtKB"/>
</dbReference>
<dbReference type="InterPro" id="IPR026713">
    <property type="entry name" value="CRACD-like"/>
</dbReference>
<dbReference type="InterPro" id="IPR028030">
    <property type="entry name" value="DUF4592"/>
</dbReference>
<dbReference type="PANTHER" id="PTHR47743:SF2">
    <property type="entry name" value="ACROSOMAL PROTEIN KIAA1210"/>
    <property type="match status" value="1"/>
</dbReference>
<dbReference type="PANTHER" id="PTHR47743">
    <property type="entry name" value="KIAA1210 / KIAA1211 FAMILY MEMBER"/>
    <property type="match status" value="1"/>
</dbReference>
<dbReference type="Pfam" id="PF15262">
    <property type="entry name" value="DUF4592"/>
    <property type="match status" value="1"/>
</dbReference>
<keyword id="KW-0968">Cytoplasmic vesicle</keyword>
<keyword id="KW-1185">Reference proteome</keyword>
<sequence>MEGFEASGEEGKKKSKFKAFKNFFSKKKKKEPEEIPEVAVLKPRFSSSSVSGSSLQPALEKQVMESKPKSGMGVKSISHDSVFCLDPEPEKGAGKLHSSPAPHRSKSLKIKSQRSQRLSISPLIRSEKVCEELEKFFASDRTTTTFRRRSSQCSSTPRMSSELSLDPETSESSTQQFSGFSTPATSQGCLDSSAAKSKIALNPRKQKKRKSTSTPVKVKQEEQLQSVPAKEKTTTKTKEAEQGEQKVDSTELSSQEQSSKTETQDTAVDKTPSTDPALRLNPRRRRRRAKNEWEILERGLLKSTQRYSLNTKAESSANKEIAGKEHSFLKLLLEKKDIGQPTTTEAEVTTVQKMPSDKGDVERELADIDVEAQKEPAPQPTSTDVAESMISGPSPHCEDKKKKDKVGVLPWIKKSTSQKEVTVLRKEEVQVHVHPSRVCGEGEEASCPELQRVQPQMKVSLESTTYHKEKHPRSGLPVPSTSISSATAEDDVSPKMNLPLPLRRRPNTGETSSDSKSTSEYESSSEMQLSPAHSFKPTRKPKDDAGAGTADDEEDGDDEKEEKDNDDDDEENVFLKSENVDVEVSKMEKQQALRYSSKLLGKPKAREASAKLESSSEDERSCEEMTSAHSSQSLEEFEECSESRGFIRGSISEERPATRCHSQALQELEEKEVSTESSSYIEKYESSEDLSSSEQEQQVPPVSKSSLKQWSAPAKPVHPIQTAQQQPPAMVNISGGPKKSGEPLSPTQTVKSRLRSQSECQVLAEPEGVVAADWDILMQPPPRPRLEQEVSAGPELTVFEKSIAVQPSGYPPQPSVKPSIKKEISLGAESAPLESPPPQHHFQPLLKPFVKQQVSAFERVISMDPKLPTQFQPRMKPQGKQSFSSTPESTAFEGSTSVDHMTLTLSQPMLQPYQEVPLESETVAAKMISTGQLHSKYSAHPLSSHQSQPVPESTSAEGEELLPSQPSVTPKFQPLMTQGSIPSAWAIPIYSPAPRMDSKPLMGSAIALESKPSRYSLQPWQSTPFEQVSVTPDHDPAAAAASWSPPIDPPTSRIPSQPLMRLAVKQPTCTELASVSVSQSSSLERLSSRFPFQPRADPEHYGAEEGVATLRRSRRHHSQSPVRSEFKEEVSSGSRRAFGERSISVGKMPPKYALQPWLCPEFQQQAKEGDVLRKAWLSGHPSQTISKHKVEKTPLPPKCPSPFLTRSKVQEISSRLESVIAQESSKKPQRGRPPSKSFVNFMAQQVFSESAPSKVVLHPKPVARGRRRPSRSLLKPKLDDYAFLYNWDNEPKEDTTLQNLPMKQPFQLSRKPEEPQEVLPFSEGAPVKWNTSARGISQALGKLSVSVSLPNEWKSSEGQLPSTQPSQAFDVAKLQSPVLPVDSANVPVKWRISEGHQPPQSFFVDYQPQVSVDSASAAAKGASCWPMLKDSASTTNVKYSQGYKDFTKSTPTSVIKPATFTSAPAQKPMVSMGTYFKDEVPKCCDETGTSSLLPTSKADVENVFGVRLRSTSQKIGMKNPDPCKPFVLISAAARKEQANKGDLQGSVGGSKQSRPAFSFEKKQGNWPRYEGTLKKSEVFRPPVAFYDQKMLHPRTRERLTRRSLSLPPTLPQREEPEWFSVAKKKAQAWSQIANIMQ</sequence>
<gene>
    <name evidence="3" type="primary">Kiaa1210</name>
    <name evidence="5" type="synonym">Gm14569</name>
</gene>
<feature type="chain" id="PRO_0000440629" description="Acrosomal protein KIAA1210">
    <location>
        <begin position="1"/>
        <end position="1637"/>
    </location>
</feature>
<feature type="region of interest" description="Disordered" evidence="1">
    <location>
        <begin position="44"/>
        <end position="121"/>
    </location>
</feature>
<feature type="region of interest" description="Disordered" evidence="1">
    <location>
        <begin position="141"/>
        <end position="293"/>
    </location>
</feature>
<feature type="region of interest" description="Disordered" evidence="1">
    <location>
        <begin position="341"/>
        <end position="404"/>
    </location>
</feature>
<feature type="region of interest" description="Disordered" evidence="1">
    <location>
        <begin position="438"/>
        <end position="759"/>
    </location>
</feature>
<feature type="region of interest" description="Disordered" evidence="1">
    <location>
        <begin position="865"/>
        <end position="896"/>
    </location>
</feature>
<feature type="region of interest" description="Disordered" evidence="1">
    <location>
        <begin position="935"/>
        <end position="975"/>
    </location>
</feature>
<feature type="region of interest" description="Disordered" evidence="1">
    <location>
        <begin position="1017"/>
        <end position="1057"/>
    </location>
</feature>
<feature type="region of interest" description="Disordered" evidence="1">
    <location>
        <begin position="1090"/>
        <end position="1137"/>
    </location>
</feature>
<feature type="region of interest" description="Disordered" evidence="1">
    <location>
        <begin position="1182"/>
        <end position="1238"/>
    </location>
</feature>
<feature type="region of interest" description="Disordered" evidence="1">
    <location>
        <begin position="1539"/>
        <end position="1558"/>
    </location>
</feature>
<feature type="compositionally biased region" description="Basic residues" evidence="1">
    <location>
        <begin position="103"/>
        <end position="114"/>
    </location>
</feature>
<feature type="compositionally biased region" description="Low complexity" evidence="1">
    <location>
        <begin position="141"/>
        <end position="156"/>
    </location>
</feature>
<feature type="compositionally biased region" description="Polar residues" evidence="1">
    <location>
        <begin position="170"/>
        <end position="190"/>
    </location>
</feature>
<feature type="compositionally biased region" description="Basic and acidic residues" evidence="1">
    <location>
        <begin position="229"/>
        <end position="249"/>
    </location>
</feature>
<feature type="compositionally biased region" description="Low complexity" evidence="1">
    <location>
        <begin position="250"/>
        <end position="261"/>
    </location>
</feature>
<feature type="compositionally biased region" description="Polar residues" evidence="1">
    <location>
        <begin position="341"/>
        <end position="353"/>
    </location>
</feature>
<feature type="compositionally biased region" description="Basic and acidic residues" evidence="1">
    <location>
        <begin position="355"/>
        <end position="374"/>
    </location>
</feature>
<feature type="compositionally biased region" description="Low complexity" evidence="1">
    <location>
        <begin position="508"/>
        <end position="526"/>
    </location>
</feature>
<feature type="compositionally biased region" description="Acidic residues" evidence="1">
    <location>
        <begin position="550"/>
        <end position="572"/>
    </location>
</feature>
<feature type="compositionally biased region" description="Low complexity" evidence="1">
    <location>
        <begin position="689"/>
        <end position="698"/>
    </location>
</feature>
<feature type="compositionally biased region" description="Polar residues" evidence="1">
    <location>
        <begin position="745"/>
        <end position="759"/>
    </location>
</feature>
<feature type="compositionally biased region" description="Polar residues" evidence="1">
    <location>
        <begin position="879"/>
        <end position="896"/>
    </location>
</feature>
<feature type="compositionally biased region" description="Polar residues" evidence="1">
    <location>
        <begin position="935"/>
        <end position="956"/>
    </location>
</feature>
<feature type="compositionally biased region" description="Polar residues" evidence="1">
    <location>
        <begin position="964"/>
        <end position="975"/>
    </location>
</feature>
<feature type="compositionally biased region" description="Polar residues" evidence="1">
    <location>
        <begin position="1017"/>
        <end position="1030"/>
    </location>
</feature>
<comment type="subunit">
    <text evidence="2">Interacts with TOP2B.</text>
</comment>
<comment type="subcellular location">
    <subcellularLocation>
        <location evidence="2">Cytoplasmic vesicle</location>
        <location evidence="2">Secretory vesicle</location>
        <location evidence="2">Acrosome</location>
    </subcellularLocation>
    <text evidence="2">Localizes to the sex body in spermatocyte, acrosome, and near the ectoplasmic specialization.</text>
</comment>
<comment type="tissue specificity">
    <text evidence="2">Predominantly expressed in testis (at protein level).</text>
</comment>
<accession>E9Q0C6</accession>